<dbReference type="EC" id="3.5.1.5" evidence="1"/>
<dbReference type="EMBL" id="AP006618">
    <property type="protein sequence ID" value="BAD57372.1"/>
    <property type="molecule type" value="Genomic_DNA"/>
</dbReference>
<dbReference type="RefSeq" id="WP_011209057.1">
    <property type="nucleotide sequence ID" value="NC_006361.1"/>
</dbReference>
<dbReference type="SMR" id="Q5YWR9"/>
<dbReference type="STRING" id="247156.NFA_25250"/>
<dbReference type="GeneID" id="61133270"/>
<dbReference type="KEGG" id="nfa:NFA_25250"/>
<dbReference type="eggNOG" id="COG0832">
    <property type="taxonomic scope" value="Bacteria"/>
</dbReference>
<dbReference type="HOGENOM" id="CLU_129707_1_1_11"/>
<dbReference type="OrthoDB" id="9797217at2"/>
<dbReference type="UniPathway" id="UPA00258">
    <property type="reaction ID" value="UER00370"/>
</dbReference>
<dbReference type="Proteomes" id="UP000006820">
    <property type="component" value="Chromosome"/>
</dbReference>
<dbReference type="GO" id="GO:0035550">
    <property type="term" value="C:urease complex"/>
    <property type="evidence" value="ECO:0007669"/>
    <property type="project" value="InterPro"/>
</dbReference>
<dbReference type="GO" id="GO:0009039">
    <property type="term" value="F:urease activity"/>
    <property type="evidence" value="ECO:0007669"/>
    <property type="project" value="UniProtKB-UniRule"/>
</dbReference>
<dbReference type="GO" id="GO:0043419">
    <property type="term" value="P:urea catabolic process"/>
    <property type="evidence" value="ECO:0007669"/>
    <property type="project" value="UniProtKB-UniRule"/>
</dbReference>
<dbReference type="CDD" id="cd00407">
    <property type="entry name" value="Urease_beta"/>
    <property type="match status" value="1"/>
</dbReference>
<dbReference type="Gene3D" id="2.10.150.10">
    <property type="entry name" value="Urease, beta subunit"/>
    <property type="match status" value="1"/>
</dbReference>
<dbReference type="HAMAP" id="MF_01954">
    <property type="entry name" value="Urease_beta"/>
    <property type="match status" value="1"/>
</dbReference>
<dbReference type="InterPro" id="IPR002019">
    <property type="entry name" value="Urease_beta-like"/>
</dbReference>
<dbReference type="InterPro" id="IPR036461">
    <property type="entry name" value="Urease_betasu_sf"/>
</dbReference>
<dbReference type="InterPro" id="IPR050069">
    <property type="entry name" value="Urease_subunit"/>
</dbReference>
<dbReference type="NCBIfam" id="NF009682">
    <property type="entry name" value="PRK13203.1"/>
    <property type="match status" value="1"/>
</dbReference>
<dbReference type="NCBIfam" id="TIGR00192">
    <property type="entry name" value="urease_beta"/>
    <property type="match status" value="1"/>
</dbReference>
<dbReference type="PANTHER" id="PTHR33569">
    <property type="entry name" value="UREASE"/>
    <property type="match status" value="1"/>
</dbReference>
<dbReference type="PANTHER" id="PTHR33569:SF1">
    <property type="entry name" value="UREASE"/>
    <property type="match status" value="1"/>
</dbReference>
<dbReference type="Pfam" id="PF00699">
    <property type="entry name" value="Urease_beta"/>
    <property type="match status" value="1"/>
</dbReference>
<dbReference type="SUPFAM" id="SSF51278">
    <property type="entry name" value="Urease, beta-subunit"/>
    <property type="match status" value="1"/>
</dbReference>
<keyword id="KW-0963">Cytoplasm</keyword>
<keyword id="KW-0378">Hydrolase</keyword>
<keyword id="KW-1185">Reference proteome</keyword>
<proteinExistence type="inferred from homology"/>
<comment type="catalytic activity">
    <reaction evidence="1">
        <text>urea + 2 H2O + H(+) = hydrogencarbonate + 2 NH4(+)</text>
        <dbReference type="Rhea" id="RHEA:20557"/>
        <dbReference type="ChEBI" id="CHEBI:15377"/>
        <dbReference type="ChEBI" id="CHEBI:15378"/>
        <dbReference type="ChEBI" id="CHEBI:16199"/>
        <dbReference type="ChEBI" id="CHEBI:17544"/>
        <dbReference type="ChEBI" id="CHEBI:28938"/>
        <dbReference type="EC" id="3.5.1.5"/>
    </reaction>
</comment>
<comment type="pathway">
    <text evidence="1">Nitrogen metabolism; urea degradation; CO(2) and NH(3) from urea (urease route): step 1/1.</text>
</comment>
<comment type="subunit">
    <text evidence="1">Heterotrimer of UreA (gamma), UreB (beta) and UreC (alpha) subunits. Three heterotrimers associate to form the active enzyme.</text>
</comment>
<comment type="subcellular location">
    <subcellularLocation>
        <location evidence="1">Cytoplasm</location>
    </subcellularLocation>
</comment>
<comment type="similarity">
    <text evidence="1">Belongs to the urease beta subunit family.</text>
</comment>
<accession>Q5YWR9</accession>
<evidence type="ECO:0000255" key="1">
    <source>
        <dbReference type="HAMAP-Rule" id="MF_01954"/>
    </source>
</evidence>
<name>URE2_NOCFA</name>
<sequence length="108" mass="11422">MIPGEYLCADGVIEINPGRERIALDVVNTGDRPVQVGSHVHFPQANAALDFDRAAAHGCRLDIPAGTAVRFEPGLAQRVSLVPLAGTREVYGIGPNPPGKLDDPEGEQ</sequence>
<reference key="1">
    <citation type="journal article" date="2004" name="Proc. Natl. Acad. Sci. U.S.A.">
        <title>The complete genomic sequence of Nocardia farcinica IFM 10152.</title>
        <authorList>
            <person name="Ishikawa J."/>
            <person name="Yamashita A."/>
            <person name="Mikami Y."/>
            <person name="Hoshino Y."/>
            <person name="Kurita H."/>
            <person name="Hotta K."/>
            <person name="Shiba T."/>
            <person name="Hattori M."/>
        </authorList>
    </citation>
    <scope>NUCLEOTIDE SEQUENCE [LARGE SCALE GENOMIC DNA]</scope>
    <source>
        <strain>IFM 10152</strain>
    </source>
</reference>
<organism>
    <name type="scientific">Nocardia farcinica (strain IFM 10152)</name>
    <dbReference type="NCBI Taxonomy" id="247156"/>
    <lineage>
        <taxon>Bacteria</taxon>
        <taxon>Bacillati</taxon>
        <taxon>Actinomycetota</taxon>
        <taxon>Actinomycetes</taxon>
        <taxon>Mycobacteriales</taxon>
        <taxon>Nocardiaceae</taxon>
        <taxon>Nocardia</taxon>
    </lineage>
</organism>
<protein>
    <recommendedName>
        <fullName evidence="1">Urease subunit beta</fullName>
        <ecNumber evidence="1">3.5.1.5</ecNumber>
    </recommendedName>
    <alternativeName>
        <fullName evidence="1">Urea amidohydrolase subunit beta</fullName>
    </alternativeName>
</protein>
<gene>
    <name evidence="1" type="primary">ureB</name>
    <name type="ordered locus">NFA_25250</name>
</gene>
<feature type="chain" id="PRO_0000234253" description="Urease subunit beta">
    <location>
        <begin position="1"/>
        <end position="108"/>
    </location>
</feature>